<dbReference type="EC" id="1.17.1.8" evidence="1"/>
<dbReference type="EMBL" id="CP001182">
    <property type="protein sequence ID" value="ACJ42827.1"/>
    <property type="molecule type" value="Genomic_DNA"/>
</dbReference>
<dbReference type="RefSeq" id="WP_001271382.1">
    <property type="nucleotide sequence ID" value="NC_011586.2"/>
</dbReference>
<dbReference type="SMR" id="B7I2B0"/>
<dbReference type="KEGG" id="abn:AB57_3899"/>
<dbReference type="HOGENOM" id="CLU_047479_2_1_6"/>
<dbReference type="UniPathway" id="UPA00034">
    <property type="reaction ID" value="UER00018"/>
</dbReference>
<dbReference type="Proteomes" id="UP000007094">
    <property type="component" value="Chromosome"/>
</dbReference>
<dbReference type="GO" id="GO:0005829">
    <property type="term" value="C:cytosol"/>
    <property type="evidence" value="ECO:0007669"/>
    <property type="project" value="TreeGrafter"/>
</dbReference>
<dbReference type="GO" id="GO:0008839">
    <property type="term" value="F:4-hydroxy-tetrahydrodipicolinate reductase"/>
    <property type="evidence" value="ECO:0007669"/>
    <property type="project" value="UniProtKB-EC"/>
</dbReference>
<dbReference type="GO" id="GO:0051287">
    <property type="term" value="F:NAD binding"/>
    <property type="evidence" value="ECO:0007669"/>
    <property type="project" value="UniProtKB-UniRule"/>
</dbReference>
<dbReference type="GO" id="GO:0050661">
    <property type="term" value="F:NADP binding"/>
    <property type="evidence" value="ECO:0007669"/>
    <property type="project" value="UniProtKB-UniRule"/>
</dbReference>
<dbReference type="GO" id="GO:0016726">
    <property type="term" value="F:oxidoreductase activity, acting on CH or CH2 groups, NAD or NADP as acceptor"/>
    <property type="evidence" value="ECO:0007669"/>
    <property type="project" value="UniProtKB-UniRule"/>
</dbReference>
<dbReference type="GO" id="GO:0019877">
    <property type="term" value="P:diaminopimelate biosynthetic process"/>
    <property type="evidence" value="ECO:0007669"/>
    <property type="project" value="UniProtKB-UniRule"/>
</dbReference>
<dbReference type="GO" id="GO:0009089">
    <property type="term" value="P:lysine biosynthetic process via diaminopimelate"/>
    <property type="evidence" value="ECO:0007669"/>
    <property type="project" value="UniProtKB-UniRule"/>
</dbReference>
<dbReference type="CDD" id="cd02274">
    <property type="entry name" value="DHDPR_N"/>
    <property type="match status" value="1"/>
</dbReference>
<dbReference type="FunFam" id="3.30.360.10:FF:000004">
    <property type="entry name" value="4-hydroxy-tetrahydrodipicolinate reductase"/>
    <property type="match status" value="1"/>
</dbReference>
<dbReference type="FunFam" id="3.40.50.720:FF:000048">
    <property type="entry name" value="4-hydroxy-tetrahydrodipicolinate reductase"/>
    <property type="match status" value="1"/>
</dbReference>
<dbReference type="Gene3D" id="3.30.360.10">
    <property type="entry name" value="Dihydrodipicolinate Reductase, domain 2"/>
    <property type="match status" value="1"/>
</dbReference>
<dbReference type="Gene3D" id="3.40.50.720">
    <property type="entry name" value="NAD(P)-binding Rossmann-like Domain"/>
    <property type="match status" value="1"/>
</dbReference>
<dbReference type="HAMAP" id="MF_00102">
    <property type="entry name" value="DapB"/>
    <property type="match status" value="1"/>
</dbReference>
<dbReference type="InterPro" id="IPR022663">
    <property type="entry name" value="DapB_C"/>
</dbReference>
<dbReference type="InterPro" id="IPR000846">
    <property type="entry name" value="DapB_N"/>
</dbReference>
<dbReference type="InterPro" id="IPR022664">
    <property type="entry name" value="DapB_N_CS"/>
</dbReference>
<dbReference type="InterPro" id="IPR023940">
    <property type="entry name" value="DHDPR_bac"/>
</dbReference>
<dbReference type="InterPro" id="IPR036291">
    <property type="entry name" value="NAD(P)-bd_dom_sf"/>
</dbReference>
<dbReference type="NCBIfam" id="TIGR00036">
    <property type="entry name" value="dapB"/>
    <property type="match status" value="1"/>
</dbReference>
<dbReference type="PANTHER" id="PTHR20836:SF0">
    <property type="entry name" value="4-HYDROXY-TETRAHYDRODIPICOLINATE REDUCTASE 1, CHLOROPLASTIC-RELATED"/>
    <property type="match status" value="1"/>
</dbReference>
<dbReference type="PANTHER" id="PTHR20836">
    <property type="entry name" value="DIHYDRODIPICOLINATE REDUCTASE"/>
    <property type="match status" value="1"/>
</dbReference>
<dbReference type="Pfam" id="PF05173">
    <property type="entry name" value="DapB_C"/>
    <property type="match status" value="1"/>
</dbReference>
<dbReference type="Pfam" id="PF01113">
    <property type="entry name" value="DapB_N"/>
    <property type="match status" value="1"/>
</dbReference>
<dbReference type="PIRSF" id="PIRSF000161">
    <property type="entry name" value="DHPR"/>
    <property type="match status" value="1"/>
</dbReference>
<dbReference type="SUPFAM" id="SSF55347">
    <property type="entry name" value="Glyceraldehyde-3-phosphate dehydrogenase-like, C-terminal domain"/>
    <property type="match status" value="1"/>
</dbReference>
<dbReference type="SUPFAM" id="SSF51735">
    <property type="entry name" value="NAD(P)-binding Rossmann-fold domains"/>
    <property type="match status" value="1"/>
</dbReference>
<dbReference type="PROSITE" id="PS01298">
    <property type="entry name" value="DAPB"/>
    <property type="match status" value="1"/>
</dbReference>
<protein>
    <recommendedName>
        <fullName evidence="1">4-hydroxy-tetrahydrodipicolinate reductase</fullName>
        <shortName evidence="1">HTPA reductase</shortName>
        <ecNumber evidence="1">1.17.1.8</ecNumber>
    </recommendedName>
</protein>
<sequence>MSAAPRIGILGAGGRMGRILIQAVQQAGYQLGAAVVRPESTLIGADAGELAGIGSIGVKLTGSLAEVLEDCDVVIDFSTPAATSEHLKLCREAGVAIVIGTTGMSDEQKAELDETAKHIPVVYAANYSVGVNVSIKLLELAAKVFGDTVDIEVIEAHHRHKVDAPSGTALMMGEAIADTLGRNLKEVAVYGREGHTGPRDRQTIGFETIRGGDIVGEHTVMFIGEGERVEVTHKATNRMNFAAGAVRAAAWVVGREARKYDMKDVLGLNDVQV</sequence>
<organism>
    <name type="scientific">Acinetobacter baumannii (strain AB0057)</name>
    <dbReference type="NCBI Taxonomy" id="480119"/>
    <lineage>
        <taxon>Bacteria</taxon>
        <taxon>Pseudomonadati</taxon>
        <taxon>Pseudomonadota</taxon>
        <taxon>Gammaproteobacteria</taxon>
        <taxon>Moraxellales</taxon>
        <taxon>Moraxellaceae</taxon>
        <taxon>Acinetobacter</taxon>
        <taxon>Acinetobacter calcoaceticus/baumannii complex</taxon>
    </lineage>
</organism>
<evidence type="ECO:0000255" key="1">
    <source>
        <dbReference type="HAMAP-Rule" id="MF_00102"/>
    </source>
</evidence>
<evidence type="ECO:0000305" key="2"/>
<feature type="chain" id="PRO_1000117357" description="4-hydroxy-tetrahydrodipicolinate reductase">
    <location>
        <begin position="1"/>
        <end position="273"/>
    </location>
</feature>
<feature type="active site" description="Proton donor/acceptor" evidence="1">
    <location>
        <position position="157"/>
    </location>
</feature>
<feature type="active site" description="Proton donor" evidence="1">
    <location>
        <position position="161"/>
    </location>
</feature>
<feature type="binding site" evidence="1">
    <location>
        <begin position="11"/>
        <end position="16"/>
    </location>
    <ligand>
        <name>NAD(+)</name>
        <dbReference type="ChEBI" id="CHEBI:57540"/>
    </ligand>
</feature>
<feature type="binding site" evidence="1">
    <location>
        <position position="37"/>
    </location>
    <ligand>
        <name>NADP(+)</name>
        <dbReference type="ChEBI" id="CHEBI:58349"/>
    </ligand>
</feature>
<feature type="binding site" evidence="1">
    <location>
        <begin position="100"/>
        <end position="102"/>
    </location>
    <ligand>
        <name>NAD(+)</name>
        <dbReference type="ChEBI" id="CHEBI:57540"/>
    </ligand>
</feature>
<feature type="binding site" evidence="1">
    <location>
        <begin position="124"/>
        <end position="127"/>
    </location>
    <ligand>
        <name>NAD(+)</name>
        <dbReference type="ChEBI" id="CHEBI:57540"/>
    </ligand>
</feature>
<feature type="binding site" evidence="1">
    <location>
        <position position="158"/>
    </location>
    <ligand>
        <name>(S)-2,3,4,5-tetrahydrodipicolinate</name>
        <dbReference type="ChEBI" id="CHEBI:16845"/>
    </ligand>
</feature>
<feature type="binding site" evidence="1">
    <location>
        <begin position="167"/>
        <end position="168"/>
    </location>
    <ligand>
        <name>(S)-2,3,4,5-tetrahydrodipicolinate</name>
        <dbReference type="ChEBI" id="CHEBI:16845"/>
    </ligand>
</feature>
<reference key="1">
    <citation type="journal article" date="2008" name="J. Bacteriol.">
        <title>Comparative genome sequence analysis of multidrug-resistant Acinetobacter baumannii.</title>
        <authorList>
            <person name="Adams M.D."/>
            <person name="Goglin K."/>
            <person name="Molyneaux N."/>
            <person name="Hujer K.M."/>
            <person name="Lavender H."/>
            <person name="Jamison J.J."/>
            <person name="MacDonald I.J."/>
            <person name="Martin K.M."/>
            <person name="Russo T."/>
            <person name="Campagnari A.A."/>
            <person name="Hujer A.M."/>
            <person name="Bonomo R.A."/>
            <person name="Gill S.R."/>
        </authorList>
    </citation>
    <scope>NUCLEOTIDE SEQUENCE [LARGE SCALE GENOMIC DNA]</scope>
    <source>
        <strain>AB0057</strain>
    </source>
</reference>
<comment type="function">
    <text evidence="1">Catalyzes the conversion of 4-hydroxy-tetrahydrodipicolinate (HTPA) to tetrahydrodipicolinate.</text>
</comment>
<comment type="catalytic activity">
    <reaction evidence="1">
        <text>(S)-2,3,4,5-tetrahydrodipicolinate + NAD(+) + H2O = (2S,4S)-4-hydroxy-2,3,4,5-tetrahydrodipicolinate + NADH + H(+)</text>
        <dbReference type="Rhea" id="RHEA:35323"/>
        <dbReference type="ChEBI" id="CHEBI:15377"/>
        <dbReference type="ChEBI" id="CHEBI:15378"/>
        <dbReference type="ChEBI" id="CHEBI:16845"/>
        <dbReference type="ChEBI" id="CHEBI:57540"/>
        <dbReference type="ChEBI" id="CHEBI:57945"/>
        <dbReference type="ChEBI" id="CHEBI:67139"/>
        <dbReference type="EC" id="1.17.1.8"/>
    </reaction>
</comment>
<comment type="catalytic activity">
    <reaction evidence="1">
        <text>(S)-2,3,4,5-tetrahydrodipicolinate + NADP(+) + H2O = (2S,4S)-4-hydroxy-2,3,4,5-tetrahydrodipicolinate + NADPH + H(+)</text>
        <dbReference type="Rhea" id="RHEA:35331"/>
        <dbReference type="ChEBI" id="CHEBI:15377"/>
        <dbReference type="ChEBI" id="CHEBI:15378"/>
        <dbReference type="ChEBI" id="CHEBI:16845"/>
        <dbReference type="ChEBI" id="CHEBI:57783"/>
        <dbReference type="ChEBI" id="CHEBI:58349"/>
        <dbReference type="ChEBI" id="CHEBI:67139"/>
        <dbReference type="EC" id="1.17.1.8"/>
    </reaction>
</comment>
<comment type="pathway">
    <text evidence="1">Amino-acid biosynthesis; L-lysine biosynthesis via DAP pathway; (S)-tetrahydrodipicolinate from L-aspartate: step 4/4.</text>
</comment>
<comment type="subcellular location">
    <subcellularLocation>
        <location evidence="1">Cytoplasm</location>
    </subcellularLocation>
</comment>
<comment type="similarity">
    <text evidence="1">Belongs to the DapB family.</text>
</comment>
<comment type="caution">
    <text evidence="2">Was originally thought to be a dihydrodipicolinate reductase (DHDPR), catalyzing the conversion of dihydrodipicolinate to tetrahydrodipicolinate. However, it was shown in E.coli that the substrate of the enzymatic reaction is not dihydrodipicolinate (DHDP) but in fact (2S,4S)-4-hydroxy-2,3,4,5-tetrahydrodipicolinic acid (HTPA), the product released by the DapA-catalyzed reaction.</text>
</comment>
<gene>
    <name evidence="1" type="primary">dapB</name>
    <name type="ordered locus">AB57_3899</name>
</gene>
<accession>B7I2B0</accession>
<name>DAPB_ACIB5</name>
<keyword id="KW-0028">Amino-acid biosynthesis</keyword>
<keyword id="KW-0963">Cytoplasm</keyword>
<keyword id="KW-0220">Diaminopimelate biosynthesis</keyword>
<keyword id="KW-0457">Lysine biosynthesis</keyword>
<keyword id="KW-0520">NAD</keyword>
<keyword id="KW-0521">NADP</keyword>
<keyword id="KW-0560">Oxidoreductase</keyword>
<proteinExistence type="inferred from homology"/>